<comment type="function">
    <text evidence="1">Site-specific tyrosine recombinase, which acts by catalyzing the cutting and rejoining of the recombining DNA molecules. The XerC-XerD complex is essential to convert dimers of the bacterial chromosome into monomers to permit their segregation at cell division. It also contributes to the segregational stability of plasmids.</text>
</comment>
<comment type="subunit">
    <text evidence="1">Forms a cyclic heterotetrameric complex composed of two molecules of XerC and two molecules of XerD.</text>
</comment>
<comment type="subcellular location">
    <subcellularLocation>
        <location evidence="1">Cytoplasm</location>
    </subcellularLocation>
</comment>
<comment type="similarity">
    <text evidence="1">Belongs to the 'phage' integrase family. XerC subfamily.</text>
</comment>
<proteinExistence type="inferred from homology"/>
<dbReference type="EMBL" id="CP000804">
    <property type="protein sequence ID" value="ABU56185.1"/>
    <property type="molecule type" value="Genomic_DNA"/>
</dbReference>
<dbReference type="RefSeq" id="WP_011997590.1">
    <property type="nucleotide sequence ID" value="NC_009767.1"/>
</dbReference>
<dbReference type="SMR" id="A7NFG3"/>
<dbReference type="STRING" id="383372.Rcas_0047"/>
<dbReference type="KEGG" id="rca:Rcas_0047"/>
<dbReference type="eggNOG" id="COG4974">
    <property type="taxonomic scope" value="Bacteria"/>
</dbReference>
<dbReference type="HOGENOM" id="CLU_027562_9_0_0"/>
<dbReference type="OrthoDB" id="9785687at2"/>
<dbReference type="Proteomes" id="UP000000263">
    <property type="component" value="Chromosome"/>
</dbReference>
<dbReference type="GO" id="GO:0005737">
    <property type="term" value="C:cytoplasm"/>
    <property type="evidence" value="ECO:0007669"/>
    <property type="project" value="UniProtKB-SubCell"/>
</dbReference>
<dbReference type="GO" id="GO:0003677">
    <property type="term" value="F:DNA binding"/>
    <property type="evidence" value="ECO:0007669"/>
    <property type="project" value="UniProtKB-KW"/>
</dbReference>
<dbReference type="GO" id="GO:0009037">
    <property type="term" value="F:tyrosine-based site-specific recombinase activity"/>
    <property type="evidence" value="ECO:0007669"/>
    <property type="project" value="UniProtKB-UniRule"/>
</dbReference>
<dbReference type="GO" id="GO:0051301">
    <property type="term" value="P:cell division"/>
    <property type="evidence" value="ECO:0007669"/>
    <property type="project" value="UniProtKB-KW"/>
</dbReference>
<dbReference type="GO" id="GO:0007059">
    <property type="term" value="P:chromosome segregation"/>
    <property type="evidence" value="ECO:0007669"/>
    <property type="project" value="UniProtKB-UniRule"/>
</dbReference>
<dbReference type="GO" id="GO:0006313">
    <property type="term" value="P:DNA transposition"/>
    <property type="evidence" value="ECO:0007669"/>
    <property type="project" value="UniProtKB-UniRule"/>
</dbReference>
<dbReference type="CDD" id="cd00798">
    <property type="entry name" value="INT_XerDC_C"/>
    <property type="match status" value="1"/>
</dbReference>
<dbReference type="Gene3D" id="1.10.150.130">
    <property type="match status" value="1"/>
</dbReference>
<dbReference type="Gene3D" id="1.10.443.10">
    <property type="entry name" value="Intergrase catalytic core"/>
    <property type="match status" value="1"/>
</dbReference>
<dbReference type="HAMAP" id="MF_01808">
    <property type="entry name" value="Recomb_XerC_XerD"/>
    <property type="match status" value="1"/>
</dbReference>
<dbReference type="InterPro" id="IPR044068">
    <property type="entry name" value="CB"/>
</dbReference>
<dbReference type="InterPro" id="IPR011010">
    <property type="entry name" value="DNA_brk_join_enz"/>
</dbReference>
<dbReference type="InterPro" id="IPR013762">
    <property type="entry name" value="Integrase-like_cat_sf"/>
</dbReference>
<dbReference type="InterPro" id="IPR002104">
    <property type="entry name" value="Integrase_catalytic"/>
</dbReference>
<dbReference type="InterPro" id="IPR010998">
    <property type="entry name" value="Integrase_recombinase_N"/>
</dbReference>
<dbReference type="InterPro" id="IPR004107">
    <property type="entry name" value="Integrase_SAM-like_N"/>
</dbReference>
<dbReference type="InterPro" id="IPR011932">
    <property type="entry name" value="Recomb_XerD"/>
</dbReference>
<dbReference type="InterPro" id="IPR023009">
    <property type="entry name" value="Tyrosine_recombinase_XerC/XerD"/>
</dbReference>
<dbReference type="InterPro" id="IPR050090">
    <property type="entry name" value="Tyrosine_recombinase_XerCD"/>
</dbReference>
<dbReference type="NCBIfam" id="NF001399">
    <property type="entry name" value="PRK00283.1"/>
    <property type="match status" value="1"/>
</dbReference>
<dbReference type="NCBIfam" id="NF040815">
    <property type="entry name" value="recomb_XerA_Arch"/>
    <property type="match status" value="1"/>
</dbReference>
<dbReference type="NCBIfam" id="TIGR02225">
    <property type="entry name" value="recomb_XerD"/>
    <property type="match status" value="1"/>
</dbReference>
<dbReference type="PANTHER" id="PTHR30349">
    <property type="entry name" value="PHAGE INTEGRASE-RELATED"/>
    <property type="match status" value="1"/>
</dbReference>
<dbReference type="PANTHER" id="PTHR30349:SF81">
    <property type="entry name" value="TYROSINE RECOMBINASE XERC"/>
    <property type="match status" value="1"/>
</dbReference>
<dbReference type="Pfam" id="PF02899">
    <property type="entry name" value="Phage_int_SAM_1"/>
    <property type="match status" value="1"/>
</dbReference>
<dbReference type="Pfam" id="PF00589">
    <property type="entry name" value="Phage_integrase"/>
    <property type="match status" value="1"/>
</dbReference>
<dbReference type="SUPFAM" id="SSF56349">
    <property type="entry name" value="DNA breaking-rejoining enzymes"/>
    <property type="match status" value="1"/>
</dbReference>
<dbReference type="PROSITE" id="PS51900">
    <property type="entry name" value="CB"/>
    <property type="match status" value="1"/>
</dbReference>
<dbReference type="PROSITE" id="PS51898">
    <property type="entry name" value="TYR_RECOMBINASE"/>
    <property type="match status" value="1"/>
</dbReference>
<gene>
    <name evidence="1" type="primary">xerC</name>
    <name type="ordered locus">Rcas_0047</name>
</gene>
<protein>
    <recommendedName>
        <fullName evidence="1">Tyrosine recombinase XerC</fullName>
    </recommendedName>
</protein>
<sequence length="314" mass="35653">MNEQVEAFLRHLADERNLSANTIAAYRTDLEQFCEFLHGRRLFAWHDVTHDDVLAFLIDLRERRYASSTVARRVAAVKSFFTFLTGRGIVQRDPTERIDSPKVDRDLPRALTPRQVDELLELPLRSPTPERIRDKAMLELLYATGVRVSELVALNVNDVDLERNEVRCIGKNGRVRVLPINGSAATALEEYFDISRNQLARGSGSSTEALFLNHRGKRLTRQGFWLILKQYAEELGLSDLTPHVLRHSFAVHMLNAGFDLRAVQELLGHTSISTTQIYTHLNHESSHTPHAHPAPRASEVNGVRDEQALVPEEK</sequence>
<feature type="chain" id="PRO_1000187612" description="Tyrosine recombinase XerC">
    <location>
        <begin position="1"/>
        <end position="314"/>
    </location>
</feature>
<feature type="domain" description="Core-binding (CB)" evidence="3">
    <location>
        <begin position="1"/>
        <end position="85"/>
    </location>
</feature>
<feature type="domain" description="Tyr recombinase" evidence="2">
    <location>
        <begin position="106"/>
        <end position="291"/>
    </location>
</feature>
<feature type="region of interest" description="Disordered" evidence="4">
    <location>
        <begin position="284"/>
        <end position="314"/>
    </location>
</feature>
<feature type="compositionally biased region" description="Basic and acidic residues" evidence="4">
    <location>
        <begin position="302"/>
        <end position="314"/>
    </location>
</feature>
<feature type="active site" evidence="1">
    <location>
        <position position="147"/>
    </location>
</feature>
<feature type="active site" evidence="1">
    <location>
        <position position="171"/>
    </location>
</feature>
<feature type="active site" evidence="1">
    <location>
        <position position="243"/>
    </location>
</feature>
<feature type="active site" evidence="1">
    <location>
        <position position="246"/>
    </location>
</feature>
<feature type="active site" evidence="1">
    <location>
        <position position="269"/>
    </location>
</feature>
<feature type="active site" description="O-(3'-phospho-DNA)-tyrosine intermediate" evidence="1">
    <location>
        <position position="278"/>
    </location>
</feature>
<evidence type="ECO:0000255" key="1">
    <source>
        <dbReference type="HAMAP-Rule" id="MF_01808"/>
    </source>
</evidence>
<evidence type="ECO:0000255" key="2">
    <source>
        <dbReference type="PROSITE-ProRule" id="PRU01246"/>
    </source>
</evidence>
<evidence type="ECO:0000255" key="3">
    <source>
        <dbReference type="PROSITE-ProRule" id="PRU01248"/>
    </source>
</evidence>
<evidence type="ECO:0000256" key="4">
    <source>
        <dbReference type="SAM" id="MobiDB-lite"/>
    </source>
</evidence>
<organism>
    <name type="scientific">Roseiflexus castenholzii (strain DSM 13941 / HLO8)</name>
    <dbReference type="NCBI Taxonomy" id="383372"/>
    <lineage>
        <taxon>Bacteria</taxon>
        <taxon>Bacillati</taxon>
        <taxon>Chloroflexota</taxon>
        <taxon>Chloroflexia</taxon>
        <taxon>Chloroflexales</taxon>
        <taxon>Roseiflexineae</taxon>
        <taxon>Roseiflexaceae</taxon>
        <taxon>Roseiflexus</taxon>
    </lineage>
</organism>
<keyword id="KW-0131">Cell cycle</keyword>
<keyword id="KW-0132">Cell division</keyword>
<keyword id="KW-0159">Chromosome partition</keyword>
<keyword id="KW-0963">Cytoplasm</keyword>
<keyword id="KW-0229">DNA integration</keyword>
<keyword id="KW-0233">DNA recombination</keyword>
<keyword id="KW-0238">DNA-binding</keyword>
<keyword id="KW-1185">Reference proteome</keyword>
<accession>A7NFG3</accession>
<reference key="1">
    <citation type="submission" date="2007-08" db="EMBL/GenBank/DDBJ databases">
        <title>Complete sequence of Roseiflexus castenholzii DSM 13941.</title>
        <authorList>
            <consortium name="US DOE Joint Genome Institute"/>
            <person name="Copeland A."/>
            <person name="Lucas S."/>
            <person name="Lapidus A."/>
            <person name="Barry K."/>
            <person name="Glavina del Rio T."/>
            <person name="Dalin E."/>
            <person name="Tice H."/>
            <person name="Pitluck S."/>
            <person name="Thompson L.S."/>
            <person name="Brettin T."/>
            <person name="Bruce D."/>
            <person name="Detter J.C."/>
            <person name="Han C."/>
            <person name="Tapia R."/>
            <person name="Schmutz J."/>
            <person name="Larimer F."/>
            <person name="Land M."/>
            <person name="Hauser L."/>
            <person name="Kyrpides N."/>
            <person name="Mikhailova N."/>
            <person name="Bryant D.A."/>
            <person name="Hanada S."/>
            <person name="Tsukatani Y."/>
            <person name="Richardson P."/>
        </authorList>
    </citation>
    <scope>NUCLEOTIDE SEQUENCE [LARGE SCALE GENOMIC DNA]</scope>
    <source>
        <strain>DSM 13941 / HLO8</strain>
    </source>
</reference>
<name>XERC_ROSCS</name>